<sequence>MKLPIYLDYSATTPVDPRVAQKMIDCLTVEGNFGNPASRSHVFGWKAEEAVENARRQVADLVNADPREIVWTSGATESNNLAIKGVAHFYASKGKHLITSKVEHKAVLDTTRQLEREGFEVTYIEPGEDGLITPAMIEAALRDDTILVSIMHVNNEIGTINDIAAIGELTRSRGVLFHVDGAQSTGKVEIDLASLKVDLMSFSAHKTYGPKGIGALYVSRKPRVRLEATMHGGGHERGMRSGTLATHQIVGMGEAFRIAKEEMAAENVRIKALSDRFFKQVENLEELYVNGSLTARVPHNLNLSFNYVEGESLIMALKDLAVSSGSACTSASLEPSYVLRALGRNDELAHSSIRFTFGRFSTEEEIDYAAQKVCEAVTRLRTLSPLWDMFKDGVDISKIEWAAH</sequence>
<gene>
    <name evidence="1" type="primary">iscS</name>
    <name type="ordered locus">Psyr_1237</name>
</gene>
<proteinExistence type="inferred from homology"/>
<comment type="function">
    <text evidence="1">Master enzyme that delivers sulfur to a number of partners involved in Fe-S cluster assembly, tRNA modification or cofactor biosynthesis. Catalyzes the removal of elemental sulfur atoms from cysteine to produce alanine. Functions as a sulfur delivery protein for Fe-S cluster synthesis onto IscU, an Fe-S scaffold assembly protein, as well as other S acceptor proteins.</text>
</comment>
<comment type="catalytic activity">
    <reaction evidence="1">
        <text>(sulfur carrier)-H + L-cysteine = (sulfur carrier)-SH + L-alanine</text>
        <dbReference type="Rhea" id="RHEA:43892"/>
        <dbReference type="Rhea" id="RHEA-COMP:14737"/>
        <dbReference type="Rhea" id="RHEA-COMP:14739"/>
        <dbReference type="ChEBI" id="CHEBI:29917"/>
        <dbReference type="ChEBI" id="CHEBI:35235"/>
        <dbReference type="ChEBI" id="CHEBI:57972"/>
        <dbReference type="ChEBI" id="CHEBI:64428"/>
        <dbReference type="EC" id="2.8.1.7"/>
    </reaction>
</comment>
<comment type="cofactor">
    <cofactor evidence="1">
        <name>pyridoxal 5'-phosphate</name>
        <dbReference type="ChEBI" id="CHEBI:597326"/>
    </cofactor>
</comment>
<comment type="pathway">
    <text evidence="1">Cofactor biosynthesis; iron-sulfur cluster biosynthesis.</text>
</comment>
<comment type="subunit">
    <text evidence="1">Homodimer. Forms a heterotetramer with IscU, interacts with other sulfur acceptors.</text>
</comment>
<comment type="subcellular location">
    <subcellularLocation>
        <location evidence="1">Cytoplasm</location>
    </subcellularLocation>
</comment>
<comment type="similarity">
    <text evidence="1">Belongs to the class-V pyridoxal-phosphate-dependent aminotransferase family. NifS/IscS subfamily.</text>
</comment>
<dbReference type="EC" id="2.8.1.7" evidence="1"/>
<dbReference type="EMBL" id="CP000075">
    <property type="protein sequence ID" value="AAY36288.1"/>
    <property type="molecule type" value="Genomic_DNA"/>
</dbReference>
<dbReference type="RefSeq" id="WP_003365095.1">
    <property type="nucleotide sequence ID" value="NC_007005.1"/>
</dbReference>
<dbReference type="RefSeq" id="YP_234326.1">
    <property type="nucleotide sequence ID" value="NC_007005.1"/>
</dbReference>
<dbReference type="SMR" id="Q4ZX34"/>
<dbReference type="STRING" id="205918.Psyr_1237"/>
<dbReference type="KEGG" id="psb:Psyr_1237"/>
<dbReference type="PATRIC" id="fig|205918.7.peg.1269"/>
<dbReference type="eggNOG" id="COG1104">
    <property type="taxonomic scope" value="Bacteria"/>
</dbReference>
<dbReference type="HOGENOM" id="CLU_003433_0_2_6"/>
<dbReference type="OrthoDB" id="9808002at2"/>
<dbReference type="UniPathway" id="UPA00266"/>
<dbReference type="Proteomes" id="UP000000426">
    <property type="component" value="Chromosome"/>
</dbReference>
<dbReference type="GO" id="GO:1990221">
    <property type="term" value="C:L-cysteine desulfurase complex"/>
    <property type="evidence" value="ECO:0007669"/>
    <property type="project" value="UniProtKB-ARBA"/>
</dbReference>
<dbReference type="GO" id="GO:0051537">
    <property type="term" value="F:2 iron, 2 sulfur cluster binding"/>
    <property type="evidence" value="ECO:0007669"/>
    <property type="project" value="UniProtKB-UniRule"/>
</dbReference>
<dbReference type="GO" id="GO:0031071">
    <property type="term" value="F:cysteine desulfurase activity"/>
    <property type="evidence" value="ECO:0007669"/>
    <property type="project" value="UniProtKB-UniRule"/>
</dbReference>
<dbReference type="GO" id="GO:0046872">
    <property type="term" value="F:metal ion binding"/>
    <property type="evidence" value="ECO:0007669"/>
    <property type="project" value="UniProtKB-KW"/>
</dbReference>
<dbReference type="GO" id="GO:0030170">
    <property type="term" value="F:pyridoxal phosphate binding"/>
    <property type="evidence" value="ECO:0007669"/>
    <property type="project" value="UniProtKB-UniRule"/>
</dbReference>
<dbReference type="GO" id="GO:0044571">
    <property type="term" value="P:[2Fe-2S] cluster assembly"/>
    <property type="evidence" value="ECO:0007669"/>
    <property type="project" value="UniProtKB-UniRule"/>
</dbReference>
<dbReference type="FunFam" id="3.40.640.10:FF:000003">
    <property type="entry name" value="Cysteine desulfurase IscS"/>
    <property type="match status" value="1"/>
</dbReference>
<dbReference type="FunFam" id="3.90.1150.10:FF:000002">
    <property type="entry name" value="Cysteine desulfurase IscS"/>
    <property type="match status" value="1"/>
</dbReference>
<dbReference type="Gene3D" id="3.90.1150.10">
    <property type="entry name" value="Aspartate Aminotransferase, domain 1"/>
    <property type="match status" value="1"/>
</dbReference>
<dbReference type="Gene3D" id="3.40.640.10">
    <property type="entry name" value="Type I PLP-dependent aspartate aminotransferase-like (Major domain)"/>
    <property type="match status" value="1"/>
</dbReference>
<dbReference type="HAMAP" id="MF_00331">
    <property type="entry name" value="Cys_desulf_IscS"/>
    <property type="match status" value="1"/>
</dbReference>
<dbReference type="InterPro" id="IPR000192">
    <property type="entry name" value="Aminotrans_V_dom"/>
</dbReference>
<dbReference type="InterPro" id="IPR020578">
    <property type="entry name" value="Aminotrans_V_PyrdxlP_BS"/>
</dbReference>
<dbReference type="InterPro" id="IPR010240">
    <property type="entry name" value="Cys_deSase_IscS"/>
</dbReference>
<dbReference type="InterPro" id="IPR016454">
    <property type="entry name" value="Cysteine_dSase"/>
</dbReference>
<dbReference type="InterPro" id="IPR015424">
    <property type="entry name" value="PyrdxlP-dep_Trfase"/>
</dbReference>
<dbReference type="InterPro" id="IPR015421">
    <property type="entry name" value="PyrdxlP-dep_Trfase_major"/>
</dbReference>
<dbReference type="InterPro" id="IPR015422">
    <property type="entry name" value="PyrdxlP-dep_Trfase_small"/>
</dbReference>
<dbReference type="NCBIfam" id="TIGR02006">
    <property type="entry name" value="IscS"/>
    <property type="match status" value="1"/>
</dbReference>
<dbReference type="NCBIfam" id="NF010611">
    <property type="entry name" value="PRK14012.1"/>
    <property type="match status" value="1"/>
</dbReference>
<dbReference type="PANTHER" id="PTHR11601:SF34">
    <property type="entry name" value="CYSTEINE DESULFURASE"/>
    <property type="match status" value="1"/>
</dbReference>
<dbReference type="PANTHER" id="PTHR11601">
    <property type="entry name" value="CYSTEINE DESULFURYLASE FAMILY MEMBER"/>
    <property type="match status" value="1"/>
</dbReference>
<dbReference type="Pfam" id="PF00266">
    <property type="entry name" value="Aminotran_5"/>
    <property type="match status" value="1"/>
</dbReference>
<dbReference type="PIRSF" id="PIRSF005572">
    <property type="entry name" value="NifS"/>
    <property type="match status" value="1"/>
</dbReference>
<dbReference type="SUPFAM" id="SSF53383">
    <property type="entry name" value="PLP-dependent transferases"/>
    <property type="match status" value="1"/>
</dbReference>
<dbReference type="PROSITE" id="PS00595">
    <property type="entry name" value="AA_TRANSFER_CLASS_5"/>
    <property type="match status" value="1"/>
</dbReference>
<reference key="1">
    <citation type="journal article" date="2005" name="Proc. Natl. Acad. Sci. U.S.A.">
        <title>Comparison of the complete genome sequences of Pseudomonas syringae pv. syringae B728a and pv. tomato DC3000.</title>
        <authorList>
            <person name="Feil H."/>
            <person name="Feil W.S."/>
            <person name="Chain P."/>
            <person name="Larimer F."/>
            <person name="Dibartolo G."/>
            <person name="Copeland A."/>
            <person name="Lykidis A."/>
            <person name="Trong S."/>
            <person name="Nolan M."/>
            <person name="Goltsman E."/>
            <person name="Thiel J."/>
            <person name="Malfatti S."/>
            <person name="Loper J.E."/>
            <person name="Lapidus A."/>
            <person name="Detter J.C."/>
            <person name="Land M."/>
            <person name="Richardson P.M."/>
            <person name="Kyrpides N.C."/>
            <person name="Ivanova N."/>
            <person name="Lindow S.E."/>
        </authorList>
    </citation>
    <scope>NUCLEOTIDE SEQUENCE [LARGE SCALE GENOMIC DNA]</scope>
    <source>
        <strain>B728a</strain>
    </source>
</reference>
<accession>Q4ZX34</accession>
<protein>
    <recommendedName>
        <fullName evidence="1">Cysteine desulfurase IscS</fullName>
        <ecNumber evidence="1">2.8.1.7</ecNumber>
    </recommendedName>
</protein>
<evidence type="ECO:0000255" key="1">
    <source>
        <dbReference type="HAMAP-Rule" id="MF_00331"/>
    </source>
</evidence>
<feature type="chain" id="PRO_1000019430" description="Cysteine desulfurase IscS">
    <location>
        <begin position="1"/>
        <end position="404"/>
    </location>
</feature>
<feature type="active site" description="Cysteine persulfide intermediate" evidence="1">
    <location>
        <position position="328"/>
    </location>
</feature>
<feature type="binding site" evidence="1">
    <location>
        <begin position="75"/>
        <end position="76"/>
    </location>
    <ligand>
        <name>pyridoxal 5'-phosphate</name>
        <dbReference type="ChEBI" id="CHEBI:597326"/>
    </ligand>
</feature>
<feature type="binding site" evidence="1">
    <location>
        <position position="155"/>
    </location>
    <ligand>
        <name>pyridoxal 5'-phosphate</name>
        <dbReference type="ChEBI" id="CHEBI:597326"/>
    </ligand>
</feature>
<feature type="binding site" evidence="1">
    <location>
        <position position="183"/>
    </location>
    <ligand>
        <name>pyridoxal 5'-phosphate</name>
        <dbReference type="ChEBI" id="CHEBI:597326"/>
    </ligand>
</feature>
<feature type="binding site" evidence="1">
    <location>
        <begin position="203"/>
        <end position="205"/>
    </location>
    <ligand>
        <name>pyridoxal 5'-phosphate</name>
        <dbReference type="ChEBI" id="CHEBI:597326"/>
    </ligand>
</feature>
<feature type="binding site" evidence="1">
    <location>
        <position position="243"/>
    </location>
    <ligand>
        <name>pyridoxal 5'-phosphate</name>
        <dbReference type="ChEBI" id="CHEBI:597326"/>
    </ligand>
</feature>
<feature type="binding site" description="via persulfide group" evidence="1">
    <location>
        <position position="328"/>
    </location>
    <ligand>
        <name>[2Fe-2S] cluster</name>
        <dbReference type="ChEBI" id="CHEBI:190135"/>
        <note>ligand shared with IscU</note>
    </ligand>
</feature>
<feature type="modified residue" description="N6-(pyridoxal phosphate)lysine" evidence="1">
    <location>
        <position position="206"/>
    </location>
</feature>
<name>ISCS_PSEU2</name>
<organism>
    <name type="scientific">Pseudomonas syringae pv. syringae (strain B728a)</name>
    <dbReference type="NCBI Taxonomy" id="205918"/>
    <lineage>
        <taxon>Bacteria</taxon>
        <taxon>Pseudomonadati</taxon>
        <taxon>Pseudomonadota</taxon>
        <taxon>Gammaproteobacteria</taxon>
        <taxon>Pseudomonadales</taxon>
        <taxon>Pseudomonadaceae</taxon>
        <taxon>Pseudomonas</taxon>
        <taxon>Pseudomonas syringae</taxon>
    </lineage>
</organism>
<keyword id="KW-0001">2Fe-2S</keyword>
<keyword id="KW-0963">Cytoplasm</keyword>
<keyword id="KW-0408">Iron</keyword>
<keyword id="KW-0411">Iron-sulfur</keyword>
<keyword id="KW-0479">Metal-binding</keyword>
<keyword id="KW-0663">Pyridoxal phosphate</keyword>
<keyword id="KW-0808">Transferase</keyword>